<keyword id="KW-0997">Cell inner membrane</keyword>
<keyword id="KW-1003">Cell membrane</keyword>
<keyword id="KW-0378">Hydrolase</keyword>
<keyword id="KW-0472">Membrane</keyword>
<keyword id="KW-0479">Metal-binding</keyword>
<keyword id="KW-0482">Metalloprotease</keyword>
<keyword id="KW-0645">Protease</keyword>
<keyword id="KW-0812">Transmembrane</keyword>
<keyword id="KW-1133">Transmembrane helix</keyword>
<keyword id="KW-0862">Zinc</keyword>
<reference key="1">
    <citation type="journal article" date="2004" name="Proc. Natl. Acad. Sci. U.S.A.">
        <title>The louse-borne human pathogen Bartonella quintana is a genomic derivative of the zoonotic agent Bartonella henselae.</title>
        <authorList>
            <person name="Alsmark U.C.M."/>
            <person name="Frank A.C."/>
            <person name="Karlberg E.O."/>
            <person name="Legault B.-A."/>
            <person name="Ardell D.H."/>
            <person name="Canbaeck B."/>
            <person name="Eriksson A.-S."/>
            <person name="Naeslund A.K."/>
            <person name="Handley S.A."/>
            <person name="Huvet M."/>
            <person name="La Scola B."/>
            <person name="Holmberg M."/>
            <person name="Andersson S.G.E."/>
        </authorList>
    </citation>
    <scope>NUCLEOTIDE SEQUENCE [LARGE SCALE GENOMIC DNA]</scope>
    <source>
        <strain>ATCC 49882 / DSM 28221 / CCUG 30454 / Houston 1</strain>
    </source>
</reference>
<feature type="chain" id="PRO_1000020848" description="Protease HtpX homolog">
    <location>
        <begin position="1"/>
        <end position="345"/>
    </location>
</feature>
<feature type="transmembrane region" description="Helical" evidence="1">
    <location>
        <begin position="6"/>
        <end position="26"/>
    </location>
</feature>
<feature type="transmembrane region" description="Helical" evidence="1">
    <location>
        <begin position="27"/>
        <end position="47"/>
    </location>
</feature>
<feature type="transmembrane region" description="Helical" evidence="1">
    <location>
        <begin position="145"/>
        <end position="165"/>
    </location>
</feature>
<feature type="transmembrane region" description="Helical" evidence="1">
    <location>
        <begin position="179"/>
        <end position="199"/>
    </location>
</feature>
<feature type="active site" evidence="1">
    <location>
        <position position="131"/>
    </location>
</feature>
<feature type="binding site" evidence="1">
    <location>
        <position position="130"/>
    </location>
    <ligand>
        <name>Zn(2+)</name>
        <dbReference type="ChEBI" id="CHEBI:29105"/>
        <note>catalytic</note>
    </ligand>
</feature>
<feature type="binding site" evidence="1">
    <location>
        <position position="134"/>
    </location>
    <ligand>
        <name>Zn(2+)</name>
        <dbReference type="ChEBI" id="CHEBI:29105"/>
        <note>catalytic</note>
    </ligand>
</feature>
<feature type="binding site" evidence="1">
    <location>
        <position position="204"/>
    </location>
    <ligand>
        <name>Zn(2+)</name>
        <dbReference type="ChEBI" id="CHEBI:29105"/>
        <note>catalytic</note>
    </ligand>
</feature>
<dbReference type="EC" id="3.4.24.-" evidence="1"/>
<dbReference type="EMBL" id="BX897699">
    <property type="protein sequence ID" value="CAF28363.1"/>
    <property type="molecule type" value="Genomic_DNA"/>
</dbReference>
<dbReference type="RefSeq" id="WP_011181363.1">
    <property type="nucleotide sequence ID" value="NZ_LRIJ02000001.1"/>
</dbReference>
<dbReference type="PaxDb" id="283166-BH16000"/>
<dbReference type="EnsemblBacteria" id="CAF28363">
    <property type="protein sequence ID" value="CAF28363"/>
    <property type="gene ID" value="BH16000"/>
</dbReference>
<dbReference type="GeneID" id="92986219"/>
<dbReference type="KEGG" id="bhe:BH16000"/>
<dbReference type="eggNOG" id="COG0501">
    <property type="taxonomic scope" value="Bacteria"/>
</dbReference>
<dbReference type="OrthoDB" id="15218at2"/>
<dbReference type="Proteomes" id="UP000000421">
    <property type="component" value="Chromosome"/>
</dbReference>
<dbReference type="GO" id="GO:0005886">
    <property type="term" value="C:plasma membrane"/>
    <property type="evidence" value="ECO:0007669"/>
    <property type="project" value="UniProtKB-SubCell"/>
</dbReference>
<dbReference type="GO" id="GO:0004222">
    <property type="term" value="F:metalloendopeptidase activity"/>
    <property type="evidence" value="ECO:0007669"/>
    <property type="project" value="UniProtKB-UniRule"/>
</dbReference>
<dbReference type="GO" id="GO:0008270">
    <property type="term" value="F:zinc ion binding"/>
    <property type="evidence" value="ECO:0007669"/>
    <property type="project" value="UniProtKB-UniRule"/>
</dbReference>
<dbReference type="GO" id="GO:0006508">
    <property type="term" value="P:proteolysis"/>
    <property type="evidence" value="ECO:0007669"/>
    <property type="project" value="UniProtKB-KW"/>
</dbReference>
<dbReference type="CDD" id="cd07336">
    <property type="entry name" value="M48B_HtpX_like"/>
    <property type="match status" value="1"/>
</dbReference>
<dbReference type="Gene3D" id="3.30.2010.10">
    <property type="entry name" value="Metalloproteases ('zincins'), catalytic domain"/>
    <property type="match status" value="1"/>
</dbReference>
<dbReference type="HAMAP" id="MF_00188">
    <property type="entry name" value="Pept_M48_protease_HtpX"/>
    <property type="match status" value="1"/>
</dbReference>
<dbReference type="InterPro" id="IPR050083">
    <property type="entry name" value="HtpX_protease"/>
</dbReference>
<dbReference type="InterPro" id="IPR022919">
    <property type="entry name" value="Pept_M48_protease_HtpX"/>
</dbReference>
<dbReference type="InterPro" id="IPR001915">
    <property type="entry name" value="Peptidase_M48"/>
</dbReference>
<dbReference type="NCBIfam" id="NF002363">
    <property type="entry name" value="PRK01345.1"/>
    <property type="match status" value="1"/>
</dbReference>
<dbReference type="NCBIfam" id="NF002826">
    <property type="entry name" value="PRK03001.1"/>
    <property type="match status" value="1"/>
</dbReference>
<dbReference type="PANTHER" id="PTHR43221">
    <property type="entry name" value="PROTEASE HTPX"/>
    <property type="match status" value="1"/>
</dbReference>
<dbReference type="PANTHER" id="PTHR43221:SF1">
    <property type="entry name" value="PROTEASE HTPX"/>
    <property type="match status" value="1"/>
</dbReference>
<dbReference type="Pfam" id="PF01435">
    <property type="entry name" value="Peptidase_M48"/>
    <property type="match status" value="1"/>
</dbReference>
<proteinExistence type="inferred from homology"/>
<evidence type="ECO:0000255" key="1">
    <source>
        <dbReference type="HAMAP-Rule" id="MF_00188"/>
    </source>
</evidence>
<accession>Q6G5S9</accession>
<sequence length="345" mass="37508">MNIMRTAMLLAFMTALFMGVGYLVGGSNGMVIALLMAGGLNFFSYWNSDKIVLRMYGAREVDQHSSPVYYKIVSDLARRASLPQPKVYIIDNAQPNAFATGRNPQNAAVAASTGLLNQLSAEEVAGVMAHELAHIEHRDTLTMTLTATIAGAISMLGNFAFFMGGQRHSSENSHSTGAIGGLLALFVAPFAAMLVQMAISRTREYAADRRGAEICGNPLWLASALSKIAGGGHTVYNEEAEHNPATAHMFIINPLRGEGADSLFSTHPATANRIAALRRQAEEMKGARVENMGWNEKIGLHKKSSDFRDLNSGAQTSVFNEESTVQRIKKRPSWLRYGDSKRPRS</sequence>
<organism>
    <name type="scientific">Bartonella henselae (strain ATCC 49882 / DSM 28221 / CCUG 30454 / Houston 1)</name>
    <name type="common">Rochalimaea henselae</name>
    <dbReference type="NCBI Taxonomy" id="283166"/>
    <lineage>
        <taxon>Bacteria</taxon>
        <taxon>Pseudomonadati</taxon>
        <taxon>Pseudomonadota</taxon>
        <taxon>Alphaproteobacteria</taxon>
        <taxon>Hyphomicrobiales</taxon>
        <taxon>Bartonellaceae</taxon>
        <taxon>Bartonella</taxon>
    </lineage>
</organism>
<comment type="cofactor">
    <cofactor evidence="1">
        <name>Zn(2+)</name>
        <dbReference type="ChEBI" id="CHEBI:29105"/>
    </cofactor>
    <text evidence="1">Binds 1 zinc ion per subunit.</text>
</comment>
<comment type="subcellular location">
    <subcellularLocation>
        <location evidence="1">Cell inner membrane</location>
        <topology evidence="1">Multi-pass membrane protein</topology>
    </subcellularLocation>
</comment>
<comment type="similarity">
    <text evidence="1">Belongs to the peptidase M48B family.</text>
</comment>
<name>HTPX_BARHE</name>
<gene>
    <name evidence="1" type="primary">htpX</name>
    <name type="ordered locus">BH16000</name>
</gene>
<protein>
    <recommendedName>
        <fullName evidence="1">Protease HtpX homolog</fullName>
        <ecNumber evidence="1">3.4.24.-</ecNumber>
    </recommendedName>
</protein>